<dbReference type="EC" id="2.3.1.46" evidence="1"/>
<dbReference type="EMBL" id="CP000308">
    <property type="protein sequence ID" value="ABG11984.1"/>
    <property type="molecule type" value="Genomic_DNA"/>
</dbReference>
<dbReference type="SMR" id="Q1CC38"/>
<dbReference type="KEGG" id="ypa:YPA_0015"/>
<dbReference type="UniPathway" id="UPA00051">
    <property type="reaction ID" value="UER00075"/>
</dbReference>
<dbReference type="Proteomes" id="UP000001971">
    <property type="component" value="Chromosome"/>
</dbReference>
<dbReference type="GO" id="GO:0005737">
    <property type="term" value="C:cytoplasm"/>
    <property type="evidence" value="ECO:0007669"/>
    <property type="project" value="UniProtKB-SubCell"/>
</dbReference>
<dbReference type="GO" id="GO:0004414">
    <property type="term" value="F:homoserine O-acetyltransferase activity"/>
    <property type="evidence" value="ECO:0007669"/>
    <property type="project" value="UniProtKB-UniRule"/>
</dbReference>
<dbReference type="GO" id="GO:0008899">
    <property type="term" value="F:homoserine O-succinyltransferase activity"/>
    <property type="evidence" value="ECO:0007669"/>
    <property type="project" value="UniProtKB-EC"/>
</dbReference>
<dbReference type="GO" id="GO:0019281">
    <property type="term" value="P:L-methionine biosynthetic process from homoserine via O-succinyl-L-homoserine and cystathionine"/>
    <property type="evidence" value="ECO:0007669"/>
    <property type="project" value="InterPro"/>
</dbReference>
<dbReference type="CDD" id="cd03131">
    <property type="entry name" value="GATase1_HTS"/>
    <property type="match status" value="1"/>
</dbReference>
<dbReference type="FunFam" id="3.40.50.880:FF:000004">
    <property type="entry name" value="Homoserine O-succinyltransferase"/>
    <property type="match status" value="1"/>
</dbReference>
<dbReference type="Gene3D" id="3.40.50.880">
    <property type="match status" value="1"/>
</dbReference>
<dbReference type="HAMAP" id="MF_00295">
    <property type="entry name" value="MetA_acyltransf"/>
    <property type="match status" value="1"/>
</dbReference>
<dbReference type="InterPro" id="IPR029062">
    <property type="entry name" value="Class_I_gatase-like"/>
</dbReference>
<dbReference type="InterPro" id="IPR005697">
    <property type="entry name" value="HST_MetA"/>
</dbReference>
<dbReference type="InterPro" id="IPR033752">
    <property type="entry name" value="MetA_family"/>
</dbReference>
<dbReference type="NCBIfam" id="TIGR01001">
    <property type="entry name" value="metA"/>
    <property type="match status" value="1"/>
</dbReference>
<dbReference type="PANTHER" id="PTHR20919">
    <property type="entry name" value="HOMOSERINE O-SUCCINYLTRANSFERASE"/>
    <property type="match status" value="1"/>
</dbReference>
<dbReference type="PANTHER" id="PTHR20919:SF0">
    <property type="entry name" value="HOMOSERINE O-SUCCINYLTRANSFERASE"/>
    <property type="match status" value="1"/>
</dbReference>
<dbReference type="Pfam" id="PF04204">
    <property type="entry name" value="HTS"/>
    <property type="match status" value="1"/>
</dbReference>
<dbReference type="PIRSF" id="PIRSF000450">
    <property type="entry name" value="H_ser_succinyltr"/>
    <property type="match status" value="1"/>
</dbReference>
<dbReference type="SUPFAM" id="SSF52317">
    <property type="entry name" value="Class I glutamine amidotransferase-like"/>
    <property type="match status" value="1"/>
</dbReference>
<organism>
    <name type="scientific">Yersinia pestis bv. Antiqua (strain Antiqua)</name>
    <dbReference type="NCBI Taxonomy" id="360102"/>
    <lineage>
        <taxon>Bacteria</taxon>
        <taxon>Pseudomonadati</taxon>
        <taxon>Pseudomonadota</taxon>
        <taxon>Gammaproteobacteria</taxon>
        <taxon>Enterobacterales</taxon>
        <taxon>Yersiniaceae</taxon>
        <taxon>Yersinia</taxon>
    </lineage>
</organism>
<sequence length="309" mass="35365">MPIRVPDELPAVSFLRNENVFVMASSRAKTQEIRPLKVLILNLMPKKIETENQFLRLLSNSPLQVDIQLLRVDSRESKNTPTEHLNNFYCDFEDIQDQNFDGLIVTGAPLGLVDFCDVAYWPQIERIIAWAKEHVTSTLFVCWAVQAALNILYGIPKMTREVKLSGIYQHQTLEPLALLTRGFDETFLAPHSRYADFPVEVLQQYTDLDILVSSEEAGAYLFASKDKRVAFVTGHPEYDVDTLAGEYQRDLAAGLNPQVPLNYFPSDDASLRPKASWRSHGHLLFANWLNYYVYQITPFDLRHMNPTLD</sequence>
<feature type="chain" id="PRO_1000021861" description="Homoserine O-succinyltransferase">
    <location>
        <begin position="1"/>
        <end position="309"/>
    </location>
</feature>
<feature type="active site" description="Acyl-thioester intermediate" evidence="1">
    <location>
        <position position="142"/>
    </location>
</feature>
<feature type="active site" description="Proton acceptor" evidence="1">
    <location>
        <position position="235"/>
    </location>
</feature>
<feature type="active site" evidence="1">
    <location>
        <position position="237"/>
    </location>
</feature>
<feature type="binding site" evidence="1">
    <location>
        <position position="163"/>
    </location>
    <ligand>
        <name>substrate</name>
    </ligand>
</feature>
<feature type="binding site" evidence="1">
    <location>
        <position position="192"/>
    </location>
    <ligand>
        <name>substrate</name>
    </ligand>
</feature>
<feature type="binding site" evidence="1">
    <location>
        <position position="249"/>
    </location>
    <ligand>
        <name>substrate</name>
    </ligand>
</feature>
<feature type="site" description="Important for acyl-CoA specificity" evidence="1">
    <location>
        <position position="111"/>
    </location>
</feature>
<feature type="site" description="Important for substrate specificity" evidence="1">
    <location>
        <position position="192"/>
    </location>
</feature>
<gene>
    <name evidence="1" type="primary">metAS</name>
    <name type="ordered locus">YPA_0015</name>
</gene>
<comment type="function">
    <text evidence="1">Transfers a succinyl group from succinyl-CoA to L-homoserine, forming succinyl-L-homoserine.</text>
</comment>
<comment type="catalytic activity">
    <reaction evidence="1">
        <text>L-homoserine + succinyl-CoA = O-succinyl-L-homoserine + CoA</text>
        <dbReference type="Rhea" id="RHEA:22008"/>
        <dbReference type="ChEBI" id="CHEBI:57287"/>
        <dbReference type="ChEBI" id="CHEBI:57292"/>
        <dbReference type="ChEBI" id="CHEBI:57476"/>
        <dbReference type="ChEBI" id="CHEBI:57661"/>
        <dbReference type="EC" id="2.3.1.46"/>
    </reaction>
</comment>
<comment type="pathway">
    <text evidence="1">Amino-acid biosynthesis; L-methionine biosynthesis via de novo pathway; O-succinyl-L-homoserine from L-homoserine: step 1/1.</text>
</comment>
<comment type="subcellular location">
    <subcellularLocation>
        <location evidence="1">Cytoplasm</location>
    </subcellularLocation>
</comment>
<comment type="similarity">
    <text evidence="1">Belongs to the MetA family.</text>
</comment>
<proteinExistence type="inferred from homology"/>
<accession>Q1CC38</accession>
<evidence type="ECO:0000255" key="1">
    <source>
        <dbReference type="HAMAP-Rule" id="MF_00295"/>
    </source>
</evidence>
<name>METAS_YERPA</name>
<reference key="1">
    <citation type="journal article" date="2006" name="J. Bacteriol.">
        <title>Complete genome sequence of Yersinia pestis strains Antiqua and Nepal516: evidence of gene reduction in an emerging pathogen.</title>
        <authorList>
            <person name="Chain P.S.G."/>
            <person name="Hu P."/>
            <person name="Malfatti S.A."/>
            <person name="Radnedge L."/>
            <person name="Larimer F."/>
            <person name="Vergez L.M."/>
            <person name="Worsham P."/>
            <person name="Chu M.C."/>
            <person name="Andersen G.L."/>
        </authorList>
    </citation>
    <scope>NUCLEOTIDE SEQUENCE [LARGE SCALE GENOMIC DNA]</scope>
    <source>
        <strain>Antiqua</strain>
    </source>
</reference>
<keyword id="KW-0012">Acyltransferase</keyword>
<keyword id="KW-0028">Amino-acid biosynthesis</keyword>
<keyword id="KW-0963">Cytoplasm</keyword>
<keyword id="KW-0486">Methionine biosynthesis</keyword>
<keyword id="KW-0808">Transferase</keyword>
<protein>
    <recommendedName>
        <fullName evidence="1">Homoserine O-succinyltransferase</fullName>
        <shortName evidence="1">HST</shortName>
        <ecNumber evidence="1">2.3.1.46</ecNumber>
    </recommendedName>
    <alternativeName>
        <fullName evidence="1">Homoserine transsuccinylase</fullName>
        <shortName evidence="1">HTS</shortName>
    </alternativeName>
</protein>